<protein>
    <recommendedName>
        <fullName evidence="1">DNA replication and repair protein RecF</fullName>
    </recommendedName>
</protein>
<sequence length="349" mass="40843">MYISNLRLQNFRNIPAKSFDFKNSINFIVGKNGSGKTSILESIYFLSHSRSFRSSQLNRIINHNADEFIIYTKAYNPDEITISLSRKKNSNNISKLNLEIQKNHTEITRNLPIQLINPESFNIINSGAQQRCKVIDWGAFYLDKTFLKIWQQTKFLVKQRNSALKQNYPYSYILSIDKKLCEFAEILDYKRQAYFTKLKPKIYEILSHFNPNLQLDIDYFRGWNLHKSLAQVLEESFNYDNKYKVTNHGPHKADIVLSVSHKPIQDIFSRGQQKLLICALKLAQGEIHNSENDNKCIYLIDDITSELDSIHTLTLFNYLKQLKSQVFITTTEKNKINEFIDTNSYILEI</sequence>
<evidence type="ECO:0000255" key="1">
    <source>
        <dbReference type="HAMAP-Rule" id="MF_00365"/>
    </source>
</evidence>
<dbReference type="EMBL" id="CP000803">
    <property type="protein sequence ID" value="ABU61905.1"/>
    <property type="molecule type" value="Genomic_DNA"/>
</dbReference>
<dbReference type="RefSeq" id="WP_003016570.1">
    <property type="nucleotide sequence ID" value="NC_009749.1"/>
</dbReference>
<dbReference type="SMR" id="A7ND52"/>
<dbReference type="KEGG" id="fta:FTA_1430"/>
<dbReference type="HOGENOM" id="CLU_040267_0_0_6"/>
<dbReference type="GO" id="GO:0005737">
    <property type="term" value="C:cytoplasm"/>
    <property type="evidence" value="ECO:0007669"/>
    <property type="project" value="UniProtKB-SubCell"/>
</dbReference>
<dbReference type="GO" id="GO:0005524">
    <property type="term" value="F:ATP binding"/>
    <property type="evidence" value="ECO:0007669"/>
    <property type="project" value="UniProtKB-UniRule"/>
</dbReference>
<dbReference type="GO" id="GO:0003697">
    <property type="term" value="F:single-stranded DNA binding"/>
    <property type="evidence" value="ECO:0007669"/>
    <property type="project" value="UniProtKB-UniRule"/>
</dbReference>
<dbReference type="GO" id="GO:0006260">
    <property type="term" value="P:DNA replication"/>
    <property type="evidence" value="ECO:0007669"/>
    <property type="project" value="UniProtKB-UniRule"/>
</dbReference>
<dbReference type="GO" id="GO:0000731">
    <property type="term" value="P:DNA synthesis involved in DNA repair"/>
    <property type="evidence" value="ECO:0007669"/>
    <property type="project" value="TreeGrafter"/>
</dbReference>
<dbReference type="GO" id="GO:0006302">
    <property type="term" value="P:double-strand break repair"/>
    <property type="evidence" value="ECO:0007669"/>
    <property type="project" value="TreeGrafter"/>
</dbReference>
<dbReference type="GO" id="GO:0009432">
    <property type="term" value="P:SOS response"/>
    <property type="evidence" value="ECO:0007669"/>
    <property type="project" value="UniProtKB-UniRule"/>
</dbReference>
<dbReference type="Gene3D" id="3.40.50.300">
    <property type="entry name" value="P-loop containing nucleotide triphosphate hydrolases"/>
    <property type="match status" value="1"/>
</dbReference>
<dbReference type="Gene3D" id="1.20.1050.90">
    <property type="entry name" value="RecF/RecN/SMC, N-terminal domain"/>
    <property type="match status" value="1"/>
</dbReference>
<dbReference type="HAMAP" id="MF_00365">
    <property type="entry name" value="RecF"/>
    <property type="match status" value="1"/>
</dbReference>
<dbReference type="InterPro" id="IPR001238">
    <property type="entry name" value="DNA-binding_RecF"/>
</dbReference>
<dbReference type="InterPro" id="IPR018078">
    <property type="entry name" value="DNA-binding_RecF_CS"/>
</dbReference>
<dbReference type="InterPro" id="IPR027417">
    <property type="entry name" value="P-loop_NTPase"/>
</dbReference>
<dbReference type="InterPro" id="IPR003395">
    <property type="entry name" value="RecF/RecN/SMC_N"/>
</dbReference>
<dbReference type="InterPro" id="IPR042174">
    <property type="entry name" value="RecF_2"/>
</dbReference>
<dbReference type="NCBIfam" id="TIGR00611">
    <property type="entry name" value="recf"/>
    <property type="match status" value="1"/>
</dbReference>
<dbReference type="PANTHER" id="PTHR32182">
    <property type="entry name" value="DNA REPLICATION AND REPAIR PROTEIN RECF"/>
    <property type="match status" value="1"/>
</dbReference>
<dbReference type="PANTHER" id="PTHR32182:SF0">
    <property type="entry name" value="DNA REPLICATION AND REPAIR PROTEIN RECF"/>
    <property type="match status" value="1"/>
</dbReference>
<dbReference type="Pfam" id="PF02463">
    <property type="entry name" value="SMC_N"/>
    <property type="match status" value="1"/>
</dbReference>
<dbReference type="SUPFAM" id="SSF52540">
    <property type="entry name" value="P-loop containing nucleoside triphosphate hydrolases"/>
    <property type="match status" value="1"/>
</dbReference>
<dbReference type="PROSITE" id="PS00618">
    <property type="entry name" value="RECF_2"/>
    <property type="match status" value="1"/>
</dbReference>
<organism>
    <name type="scientific">Francisella tularensis subsp. holarctica (strain FTNF002-00 / FTA)</name>
    <dbReference type="NCBI Taxonomy" id="458234"/>
    <lineage>
        <taxon>Bacteria</taxon>
        <taxon>Pseudomonadati</taxon>
        <taxon>Pseudomonadota</taxon>
        <taxon>Gammaproteobacteria</taxon>
        <taxon>Thiotrichales</taxon>
        <taxon>Francisellaceae</taxon>
        <taxon>Francisella</taxon>
    </lineage>
</organism>
<comment type="function">
    <text evidence="1">The RecF protein is involved in DNA metabolism; it is required for DNA replication and normal SOS inducibility. RecF binds preferentially to single-stranded, linear DNA. It also seems to bind ATP.</text>
</comment>
<comment type="subcellular location">
    <subcellularLocation>
        <location evidence="1">Cytoplasm</location>
    </subcellularLocation>
</comment>
<comment type="similarity">
    <text evidence="1">Belongs to the RecF family.</text>
</comment>
<name>RECF_FRATF</name>
<gene>
    <name evidence="1" type="primary">recF</name>
    <name type="ordered locus">FTA_1430</name>
</gene>
<reference key="1">
    <citation type="journal article" date="2009" name="PLoS ONE">
        <title>Complete genome sequence of Francisella tularensis subspecies holarctica FTNF002-00.</title>
        <authorList>
            <person name="Barabote R.D."/>
            <person name="Xie G."/>
            <person name="Brettin T.S."/>
            <person name="Hinrichs S.H."/>
            <person name="Fey P.D."/>
            <person name="Jay J.J."/>
            <person name="Engle J.L."/>
            <person name="Godbole S.D."/>
            <person name="Noronha J.M."/>
            <person name="Scheuermann R.H."/>
            <person name="Zhou L.W."/>
            <person name="Lion C."/>
            <person name="Dempsey M.P."/>
        </authorList>
    </citation>
    <scope>NUCLEOTIDE SEQUENCE [LARGE SCALE GENOMIC DNA]</scope>
    <source>
        <strain>FTNF002-00 / FTA</strain>
    </source>
</reference>
<keyword id="KW-0067">ATP-binding</keyword>
<keyword id="KW-0963">Cytoplasm</keyword>
<keyword id="KW-0227">DNA damage</keyword>
<keyword id="KW-0234">DNA repair</keyword>
<keyword id="KW-0235">DNA replication</keyword>
<keyword id="KW-0238">DNA-binding</keyword>
<keyword id="KW-0547">Nucleotide-binding</keyword>
<keyword id="KW-0742">SOS response</keyword>
<accession>A7ND52</accession>
<proteinExistence type="inferred from homology"/>
<feature type="chain" id="PRO_1000205487" description="DNA replication and repair protein RecF">
    <location>
        <begin position="1"/>
        <end position="349"/>
    </location>
</feature>
<feature type="binding site" evidence="1">
    <location>
        <begin position="30"/>
        <end position="37"/>
    </location>
    <ligand>
        <name>ATP</name>
        <dbReference type="ChEBI" id="CHEBI:30616"/>
    </ligand>
</feature>